<evidence type="ECO:0000250" key="1"/>
<evidence type="ECO:0000256" key="2">
    <source>
        <dbReference type="SAM" id="MobiDB-lite"/>
    </source>
</evidence>
<evidence type="ECO:0000305" key="3"/>
<gene>
    <name type="primary">tfg2</name>
    <name type="ORF">SPBC1198.13c</name>
    <name type="ORF">SPBC660.03c</name>
</gene>
<comment type="function">
    <text evidence="1">TFIIF is a general transcription initiation factor that binds to RNA polymerase II and helps to recruit it to the initiation complex in collaboration with TFIIB. It promotes transcription elongation (By similarity).</text>
</comment>
<comment type="subunit">
    <text>Component of the fcp1/TFIIF/polII complex via interaction of tfg3 with both tfg1/TFIIF-alpha and tfg2/TFIIF-beta subunits.</text>
</comment>
<comment type="subcellular location">
    <subcellularLocation>
        <location evidence="1">Nucleus</location>
    </subcellularLocation>
</comment>
<comment type="similarity">
    <text evidence="3">Belongs to the TFIIF beta subunit family.</text>
</comment>
<proteinExistence type="evidence at protein level"/>
<dbReference type="EMBL" id="CU329671">
    <property type="protein sequence ID" value="CAB91188.1"/>
    <property type="molecule type" value="Genomic_DNA"/>
</dbReference>
<dbReference type="PIR" id="T40615">
    <property type="entry name" value="T40615"/>
</dbReference>
<dbReference type="RefSeq" id="NP_595082.1">
    <property type="nucleotide sequence ID" value="NM_001020988.2"/>
</dbReference>
<dbReference type="SMR" id="O94424"/>
<dbReference type="BioGRID" id="276468">
    <property type="interactions" value="7"/>
</dbReference>
<dbReference type="FunCoup" id="O94424">
    <property type="interactions" value="525"/>
</dbReference>
<dbReference type="IntAct" id="O94424">
    <property type="interactions" value="1"/>
</dbReference>
<dbReference type="STRING" id="284812.O94424"/>
<dbReference type="iPTMnet" id="O94424"/>
<dbReference type="PaxDb" id="4896-SPBC1198.13c.1"/>
<dbReference type="EnsemblFungi" id="SPBC1198.13c.1">
    <property type="protein sequence ID" value="SPBC1198.13c.1:pep"/>
    <property type="gene ID" value="SPBC1198.13c"/>
</dbReference>
<dbReference type="GeneID" id="2539924"/>
<dbReference type="KEGG" id="spo:2539924"/>
<dbReference type="PomBase" id="SPBC1198.13c">
    <property type="gene designation" value="tfg2"/>
</dbReference>
<dbReference type="VEuPathDB" id="FungiDB:SPBC1198.13c"/>
<dbReference type="eggNOG" id="KOG2905">
    <property type="taxonomic scope" value="Eukaryota"/>
</dbReference>
<dbReference type="HOGENOM" id="CLU_047858_0_0_1"/>
<dbReference type="InParanoid" id="O94424"/>
<dbReference type="OMA" id="PIADNCY"/>
<dbReference type="PhylomeDB" id="O94424"/>
<dbReference type="Reactome" id="R-SPO-113418">
    <property type="pathway name" value="Formation of the Early Elongation Complex"/>
</dbReference>
<dbReference type="Reactome" id="R-SPO-674695">
    <property type="pathway name" value="RNA Polymerase II Pre-transcription Events"/>
</dbReference>
<dbReference type="Reactome" id="R-SPO-6796648">
    <property type="pathway name" value="TP53 Regulates Transcription of DNA Repair Genes"/>
</dbReference>
<dbReference type="Reactome" id="R-SPO-6807505">
    <property type="pathway name" value="RNA polymerase II transcribes snRNA genes"/>
</dbReference>
<dbReference type="Reactome" id="R-SPO-72086">
    <property type="pathway name" value="mRNA Capping"/>
</dbReference>
<dbReference type="Reactome" id="R-SPO-72163">
    <property type="pathway name" value="mRNA Splicing - Major Pathway"/>
</dbReference>
<dbReference type="Reactome" id="R-SPO-72203">
    <property type="pathway name" value="Processing of Capped Intron-Containing Pre-mRNA"/>
</dbReference>
<dbReference type="Reactome" id="R-SPO-73776">
    <property type="pathway name" value="RNA Polymerase II Promoter Escape"/>
</dbReference>
<dbReference type="Reactome" id="R-SPO-73779">
    <property type="pathway name" value="RNA Polymerase II Transcription Pre-Initiation And Promoter Opening"/>
</dbReference>
<dbReference type="Reactome" id="R-SPO-75953">
    <property type="pathway name" value="RNA Polymerase II Transcription Initiation"/>
</dbReference>
<dbReference type="Reactome" id="R-SPO-76042">
    <property type="pathway name" value="RNA Polymerase II Transcription Initiation And Promoter Clearance"/>
</dbReference>
<dbReference type="Reactome" id="R-SPO-77075">
    <property type="pathway name" value="RNA Pol II CTD phosphorylation and interaction with CE"/>
</dbReference>
<dbReference type="Reactome" id="R-SPO-9018519">
    <property type="pathway name" value="Estrogen-dependent gene expression"/>
</dbReference>
<dbReference type="PRO" id="PR:O94424"/>
<dbReference type="Proteomes" id="UP000002485">
    <property type="component" value="Chromosome II"/>
</dbReference>
<dbReference type="GO" id="GO:0005634">
    <property type="term" value="C:nucleus"/>
    <property type="evidence" value="ECO:0007005"/>
    <property type="project" value="PomBase"/>
</dbReference>
<dbReference type="GO" id="GO:0005674">
    <property type="term" value="C:transcription factor TFIIF complex"/>
    <property type="evidence" value="ECO:0000318"/>
    <property type="project" value="GO_Central"/>
</dbReference>
<dbReference type="GO" id="GO:0003677">
    <property type="term" value="F:DNA binding"/>
    <property type="evidence" value="ECO:0007669"/>
    <property type="project" value="UniProtKB-KW"/>
</dbReference>
<dbReference type="GO" id="GO:0000166">
    <property type="term" value="F:nucleotide binding"/>
    <property type="evidence" value="ECO:0007669"/>
    <property type="project" value="UniProtKB-KW"/>
</dbReference>
<dbReference type="GO" id="GO:0016251">
    <property type="term" value="F:RNA polymerase II general transcription initiation factor activity"/>
    <property type="evidence" value="ECO:0000314"/>
    <property type="project" value="PomBase"/>
</dbReference>
<dbReference type="GO" id="GO:0006367">
    <property type="term" value="P:transcription initiation at RNA polymerase II promoter"/>
    <property type="evidence" value="ECO:0000314"/>
    <property type="project" value="PomBase"/>
</dbReference>
<dbReference type="CDD" id="cd07980">
    <property type="entry name" value="TFIIF_beta"/>
    <property type="match status" value="1"/>
</dbReference>
<dbReference type="FunFam" id="1.10.10.10:FF:000035">
    <property type="entry name" value="General transcription factor IIF subunit 2"/>
    <property type="match status" value="1"/>
</dbReference>
<dbReference type="Gene3D" id="1.10.10.10">
    <property type="entry name" value="Winged helix-like DNA-binding domain superfamily/Winged helix DNA-binding domain"/>
    <property type="match status" value="1"/>
</dbReference>
<dbReference type="InterPro" id="IPR003196">
    <property type="entry name" value="TFIIF_beta"/>
</dbReference>
<dbReference type="InterPro" id="IPR040450">
    <property type="entry name" value="TFIIF_beta_HTH"/>
</dbReference>
<dbReference type="InterPro" id="IPR040504">
    <property type="entry name" value="TFIIF_beta_N"/>
</dbReference>
<dbReference type="InterPro" id="IPR011039">
    <property type="entry name" value="TFIIF_interaction"/>
</dbReference>
<dbReference type="InterPro" id="IPR036388">
    <property type="entry name" value="WH-like_DNA-bd_sf"/>
</dbReference>
<dbReference type="InterPro" id="IPR036390">
    <property type="entry name" value="WH_DNA-bd_sf"/>
</dbReference>
<dbReference type="PANTHER" id="PTHR10445">
    <property type="entry name" value="GENERAL TRANSCRIPTION FACTOR IIF SUBUNIT 2"/>
    <property type="match status" value="1"/>
</dbReference>
<dbReference type="PANTHER" id="PTHR10445:SF0">
    <property type="entry name" value="GENERAL TRANSCRIPTION FACTOR IIF SUBUNIT 2"/>
    <property type="match status" value="1"/>
</dbReference>
<dbReference type="Pfam" id="PF02270">
    <property type="entry name" value="TFIIF_beta"/>
    <property type="match status" value="1"/>
</dbReference>
<dbReference type="Pfam" id="PF17683">
    <property type="entry name" value="TFIIF_beta_N"/>
    <property type="match status" value="1"/>
</dbReference>
<dbReference type="SUPFAM" id="SSF50916">
    <property type="entry name" value="Rap30/74 interaction domains"/>
    <property type="match status" value="1"/>
</dbReference>
<dbReference type="SUPFAM" id="SSF46785">
    <property type="entry name" value="Winged helix' DNA-binding domain"/>
    <property type="match status" value="1"/>
</dbReference>
<keyword id="KW-0238">DNA-binding</keyword>
<keyword id="KW-0547">Nucleotide-binding</keyword>
<keyword id="KW-0539">Nucleus</keyword>
<keyword id="KW-1185">Reference proteome</keyword>
<keyword id="KW-0804">Transcription</keyword>
<keyword id="KW-0805">Transcription regulation</keyword>
<reference key="1">
    <citation type="journal article" date="2002" name="Nature">
        <title>The genome sequence of Schizosaccharomyces pombe.</title>
        <authorList>
            <person name="Wood V."/>
            <person name="Gwilliam R."/>
            <person name="Rajandream M.A."/>
            <person name="Lyne M.H."/>
            <person name="Lyne R."/>
            <person name="Stewart A."/>
            <person name="Sgouros J.G."/>
            <person name="Peat N."/>
            <person name="Hayles J."/>
            <person name="Baker S.G."/>
            <person name="Basham D."/>
            <person name="Bowman S."/>
            <person name="Brooks K."/>
            <person name="Brown D."/>
            <person name="Brown S."/>
            <person name="Chillingworth T."/>
            <person name="Churcher C.M."/>
            <person name="Collins M."/>
            <person name="Connor R."/>
            <person name="Cronin A."/>
            <person name="Davis P."/>
            <person name="Feltwell T."/>
            <person name="Fraser A."/>
            <person name="Gentles S."/>
            <person name="Goble A."/>
            <person name="Hamlin N."/>
            <person name="Harris D.E."/>
            <person name="Hidalgo J."/>
            <person name="Hodgson G."/>
            <person name="Holroyd S."/>
            <person name="Hornsby T."/>
            <person name="Howarth S."/>
            <person name="Huckle E.J."/>
            <person name="Hunt S."/>
            <person name="Jagels K."/>
            <person name="James K.D."/>
            <person name="Jones L."/>
            <person name="Jones M."/>
            <person name="Leather S."/>
            <person name="McDonald S."/>
            <person name="McLean J."/>
            <person name="Mooney P."/>
            <person name="Moule S."/>
            <person name="Mungall K.L."/>
            <person name="Murphy L.D."/>
            <person name="Niblett D."/>
            <person name="Odell C."/>
            <person name="Oliver K."/>
            <person name="O'Neil S."/>
            <person name="Pearson D."/>
            <person name="Quail M.A."/>
            <person name="Rabbinowitsch E."/>
            <person name="Rutherford K.M."/>
            <person name="Rutter S."/>
            <person name="Saunders D."/>
            <person name="Seeger K."/>
            <person name="Sharp S."/>
            <person name="Skelton J."/>
            <person name="Simmonds M.N."/>
            <person name="Squares R."/>
            <person name="Squares S."/>
            <person name="Stevens K."/>
            <person name="Taylor K."/>
            <person name="Taylor R.G."/>
            <person name="Tivey A."/>
            <person name="Walsh S.V."/>
            <person name="Warren T."/>
            <person name="Whitehead S."/>
            <person name="Woodward J.R."/>
            <person name="Volckaert G."/>
            <person name="Aert R."/>
            <person name="Robben J."/>
            <person name="Grymonprez B."/>
            <person name="Weltjens I."/>
            <person name="Vanstreels E."/>
            <person name="Rieger M."/>
            <person name="Schaefer M."/>
            <person name="Mueller-Auer S."/>
            <person name="Gabel C."/>
            <person name="Fuchs M."/>
            <person name="Duesterhoeft A."/>
            <person name="Fritzc C."/>
            <person name="Holzer E."/>
            <person name="Moestl D."/>
            <person name="Hilbert H."/>
            <person name="Borzym K."/>
            <person name="Langer I."/>
            <person name="Beck A."/>
            <person name="Lehrach H."/>
            <person name="Reinhardt R."/>
            <person name="Pohl T.M."/>
            <person name="Eger P."/>
            <person name="Zimmermann W."/>
            <person name="Wedler H."/>
            <person name="Wambutt R."/>
            <person name="Purnelle B."/>
            <person name="Goffeau A."/>
            <person name="Cadieu E."/>
            <person name="Dreano S."/>
            <person name="Gloux S."/>
            <person name="Lelaure V."/>
            <person name="Mottier S."/>
            <person name="Galibert F."/>
            <person name="Aves S.J."/>
            <person name="Xiang Z."/>
            <person name="Hunt C."/>
            <person name="Moore K."/>
            <person name="Hurst S.M."/>
            <person name="Lucas M."/>
            <person name="Rochet M."/>
            <person name="Gaillardin C."/>
            <person name="Tallada V.A."/>
            <person name="Garzon A."/>
            <person name="Thode G."/>
            <person name="Daga R.R."/>
            <person name="Cruzado L."/>
            <person name="Jimenez J."/>
            <person name="Sanchez M."/>
            <person name="del Rey F."/>
            <person name="Benito J."/>
            <person name="Dominguez A."/>
            <person name="Revuelta J.L."/>
            <person name="Moreno S."/>
            <person name="Armstrong J."/>
            <person name="Forsburg S.L."/>
            <person name="Cerutti L."/>
            <person name="Lowe T."/>
            <person name="McCombie W.R."/>
            <person name="Paulsen I."/>
            <person name="Potashkin J."/>
            <person name="Shpakovski G.V."/>
            <person name="Ussery D."/>
            <person name="Barrell B.G."/>
            <person name="Nurse P."/>
        </authorList>
    </citation>
    <scope>NUCLEOTIDE SEQUENCE [LARGE SCALE GENOMIC DNA]</scope>
    <source>
        <strain>972 / ATCC 24843</strain>
    </source>
</reference>
<reference key="2">
    <citation type="journal article" date="2004" name="Nucleic Acids Res.">
        <title>Tfg3, a subunit of the general transcription factor TFIIF in Schizosaccharomyces pombe, functions under stress conditions.</title>
        <authorList>
            <person name="Kimura M."/>
            <person name="Ishihama A."/>
        </authorList>
    </citation>
    <scope>INTERACTION WITH TFG3</scope>
</reference>
<organism>
    <name type="scientific">Schizosaccharomyces pombe (strain 972 / ATCC 24843)</name>
    <name type="common">Fission yeast</name>
    <dbReference type="NCBI Taxonomy" id="284812"/>
    <lineage>
        <taxon>Eukaryota</taxon>
        <taxon>Fungi</taxon>
        <taxon>Dikarya</taxon>
        <taxon>Ascomycota</taxon>
        <taxon>Taphrinomycotina</taxon>
        <taxon>Schizosaccharomycetes</taxon>
        <taxon>Schizosaccharomycetales</taxon>
        <taxon>Schizosaccharomycetaceae</taxon>
        <taxon>Schizosaccharomyces</taxon>
    </lineage>
</organism>
<name>T2FB_SCHPO</name>
<accession>O94424</accession>
<protein>
    <recommendedName>
        <fullName>Transcription initiation factor IIF subunit beta</fullName>
    </recommendedName>
    <alternativeName>
        <fullName>TFIIF medium subunit</fullName>
    </alternativeName>
    <alternativeName>
        <fullName>TFIIF-beta</fullName>
    </alternativeName>
</protein>
<sequence length="307" mass="34623">MSEEKPTVRTEEDDRYEDDAGDLDLGQIGSRVWLVKIPKFLMDKWNSIPEDDAANLGCVRVKNDEIQLLLQNSPENADVPKIYNLRVMNKFVRNSYVFRESETSSSMKSTALVGTVAHECNVSPVINDDYRRVMQKRALAASAPKRKVQMIDDRGGSLLAPGTLGSRSRSTTSFIRNVKPRTGEGLKNSRIPRNELLDILFKCFEDYEYWTLKGLREYVKQPEVYLKEVLDSIAILNKRGPYALKYSLKPEYKGTMDAASVELRNQQASQSESSSIDHTGKNTSPDNPGTNAEEDEDDDGVEMIDVV</sequence>
<feature type="chain" id="PRO_0000238605" description="Transcription initiation factor IIF subunit beta">
    <location>
        <begin position="1"/>
        <end position="307"/>
    </location>
</feature>
<feature type="region of interest" description="Disordered" evidence="2">
    <location>
        <begin position="1"/>
        <end position="22"/>
    </location>
</feature>
<feature type="region of interest" description="Disordered" evidence="2">
    <location>
        <begin position="261"/>
        <end position="307"/>
    </location>
</feature>
<feature type="compositionally biased region" description="Basic and acidic residues" evidence="2">
    <location>
        <begin position="1"/>
        <end position="12"/>
    </location>
</feature>
<feature type="compositionally biased region" description="Acidic residues" evidence="2">
    <location>
        <begin position="13"/>
        <end position="22"/>
    </location>
</feature>
<feature type="compositionally biased region" description="Polar residues" evidence="2">
    <location>
        <begin position="263"/>
        <end position="290"/>
    </location>
</feature>
<feature type="compositionally biased region" description="Acidic residues" evidence="2">
    <location>
        <begin position="292"/>
        <end position="307"/>
    </location>
</feature>